<dbReference type="EC" id="2.5.1.7" evidence="1"/>
<dbReference type="EMBL" id="AE001437">
    <property type="protein sequence ID" value="AAK81464.1"/>
    <property type="molecule type" value="Genomic_DNA"/>
</dbReference>
<dbReference type="PIR" id="E97334">
    <property type="entry name" value="E97334"/>
</dbReference>
<dbReference type="RefSeq" id="NP_350124.1">
    <property type="nucleotide sequence ID" value="NC_003030.1"/>
</dbReference>
<dbReference type="RefSeq" id="WP_010966804.1">
    <property type="nucleotide sequence ID" value="NC_003030.1"/>
</dbReference>
<dbReference type="SMR" id="Q97DD9"/>
<dbReference type="STRING" id="272562.CA_C3539"/>
<dbReference type="KEGG" id="cac:CA_C3539"/>
<dbReference type="PATRIC" id="fig|272562.8.peg.3728"/>
<dbReference type="eggNOG" id="COG0766">
    <property type="taxonomic scope" value="Bacteria"/>
</dbReference>
<dbReference type="HOGENOM" id="CLU_027387_0_0_9"/>
<dbReference type="OrthoDB" id="9803760at2"/>
<dbReference type="UniPathway" id="UPA00219"/>
<dbReference type="Proteomes" id="UP000000814">
    <property type="component" value="Chromosome"/>
</dbReference>
<dbReference type="GO" id="GO:0005737">
    <property type="term" value="C:cytoplasm"/>
    <property type="evidence" value="ECO:0007669"/>
    <property type="project" value="UniProtKB-SubCell"/>
</dbReference>
<dbReference type="GO" id="GO:0008760">
    <property type="term" value="F:UDP-N-acetylglucosamine 1-carboxyvinyltransferase activity"/>
    <property type="evidence" value="ECO:0007669"/>
    <property type="project" value="UniProtKB-UniRule"/>
</dbReference>
<dbReference type="GO" id="GO:0051301">
    <property type="term" value="P:cell division"/>
    <property type="evidence" value="ECO:0007669"/>
    <property type="project" value="UniProtKB-KW"/>
</dbReference>
<dbReference type="GO" id="GO:0071555">
    <property type="term" value="P:cell wall organization"/>
    <property type="evidence" value="ECO:0007669"/>
    <property type="project" value="UniProtKB-KW"/>
</dbReference>
<dbReference type="GO" id="GO:0009252">
    <property type="term" value="P:peptidoglycan biosynthetic process"/>
    <property type="evidence" value="ECO:0007669"/>
    <property type="project" value="UniProtKB-UniRule"/>
</dbReference>
<dbReference type="GO" id="GO:0008360">
    <property type="term" value="P:regulation of cell shape"/>
    <property type="evidence" value="ECO:0007669"/>
    <property type="project" value="UniProtKB-KW"/>
</dbReference>
<dbReference type="GO" id="GO:0019277">
    <property type="term" value="P:UDP-N-acetylgalactosamine biosynthetic process"/>
    <property type="evidence" value="ECO:0007669"/>
    <property type="project" value="InterPro"/>
</dbReference>
<dbReference type="CDD" id="cd01555">
    <property type="entry name" value="UdpNAET"/>
    <property type="match status" value="1"/>
</dbReference>
<dbReference type="FunFam" id="3.65.10.10:FF:000001">
    <property type="entry name" value="UDP-N-acetylglucosamine 1-carboxyvinyltransferase"/>
    <property type="match status" value="1"/>
</dbReference>
<dbReference type="Gene3D" id="3.65.10.10">
    <property type="entry name" value="Enolpyruvate transferase domain"/>
    <property type="match status" value="2"/>
</dbReference>
<dbReference type="HAMAP" id="MF_00111">
    <property type="entry name" value="MurA"/>
    <property type="match status" value="1"/>
</dbReference>
<dbReference type="InterPro" id="IPR001986">
    <property type="entry name" value="Enolpyruvate_Tfrase_dom"/>
</dbReference>
<dbReference type="InterPro" id="IPR036968">
    <property type="entry name" value="Enolpyruvate_Tfrase_sf"/>
</dbReference>
<dbReference type="InterPro" id="IPR050068">
    <property type="entry name" value="MurA_subfamily"/>
</dbReference>
<dbReference type="InterPro" id="IPR013792">
    <property type="entry name" value="RNA3'P_cycl/enolpyr_Trfase_a/b"/>
</dbReference>
<dbReference type="InterPro" id="IPR005750">
    <property type="entry name" value="UDP_GlcNAc_COvinyl_MurA"/>
</dbReference>
<dbReference type="NCBIfam" id="TIGR01072">
    <property type="entry name" value="murA"/>
    <property type="match status" value="1"/>
</dbReference>
<dbReference type="NCBIfam" id="NF006873">
    <property type="entry name" value="PRK09369.1"/>
    <property type="match status" value="1"/>
</dbReference>
<dbReference type="NCBIfam" id="NF009470">
    <property type="entry name" value="PRK12830.1"/>
    <property type="match status" value="1"/>
</dbReference>
<dbReference type="PANTHER" id="PTHR43783">
    <property type="entry name" value="UDP-N-ACETYLGLUCOSAMINE 1-CARBOXYVINYLTRANSFERASE"/>
    <property type="match status" value="1"/>
</dbReference>
<dbReference type="PANTHER" id="PTHR43783:SF2">
    <property type="entry name" value="UDP-N-ACETYLGLUCOSAMINE 1-CARBOXYVINYLTRANSFERASE 2"/>
    <property type="match status" value="1"/>
</dbReference>
<dbReference type="Pfam" id="PF00275">
    <property type="entry name" value="EPSP_synthase"/>
    <property type="match status" value="1"/>
</dbReference>
<dbReference type="SUPFAM" id="SSF55205">
    <property type="entry name" value="EPT/RTPC-like"/>
    <property type="match status" value="1"/>
</dbReference>
<feature type="chain" id="PRO_0000178864" description="UDP-N-acetylglucosamine 1-carboxyvinyltransferase 2">
    <location>
        <begin position="1"/>
        <end position="418"/>
    </location>
</feature>
<feature type="active site" description="Proton donor" evidence="1">
    <location>
        <position position="117"/>
    </location>
</feature>
<feature type="binding site" evidence="1">
    <location>
        <begin position="22"/>
        <end position="23"/>
    </location>
    <ligand>
        <name>phosphoenolpyruvate</name>
        <dbReference type="ChEBI" id="CHEBI:58702"/>
    </ligand>
</feature>
<feature type="binding site" evidence="1">
    <location>
        <position position="93"/>
    </location>
    <ligand>
        <name>UDP-N-acetyl-alpha-D-glucosamine</name>
        <dbReference type="ChEBI" id="CHEBI:57705"/>
    </ligand>
</feature>
<feature type="binding site" evidence="1">
    <location>
        <begin position="122"/>
        <end position="126"/>
    </location>
    <ligand>
        <name>UDP-N-acetyl-alpha-D-glucosamine</name>
        <dbReference type="ChEBI" id="CHEBI:57705"/>
    </ligand>
</feature>
<feature type="binding site" evidence="1">
    <location>
        <position position="305"/>
    </location>
    <ligand>
        <name>UDP-N-acetyl-alpha-D-glucosamine</name>
        <dbReference type="ChEBI" id="CHEBI:57705"/>
    </ligand>
</feature>
<feature type="binding site" evidence="1">
    <location>
        <position position="327"/>
    </location>
    <ligand>
        <name>UDP-N-acetyl-alpha-D-glucosamine</name>
        <dbReference type="ChEBI" id="CHEBI:57705"/>
    </ligand>
</feature>
<feature type="modified residue" description="2-(S-cysteinyl)pyruvic acid O-phosphothioketal" evidence="1">
    <location>
        <position position="117"/>
    </location>
</feature>
<gene>
    <name evidence="1" type="primary">murA2</name>
    <name type="synonym">murZ</name>
    <name type="ordered locus">CA_C3539</name>
</gene>
<comment type="function">
    <text evidence="1">Cell wall formation. Adds enolpyruvyl to UDP-N-acetylglucosamine.</text>
</comment>
<comment type="catalytic activity">
    <reaction evidence="1">
        <text>phosphoenolpyruvate + UDP-N-acetyl-alpha-D-glucosamine = UDP-N-acetyl-3-O-(1-carboxyvinyl)-alpha-D-glucosamine + phosphate</text>
        <dbReference type="Rhea" id="RHEA:18681"/>
        <dbReference type="ChEBI" id="CHEBI:43474"/>
        <dbReference type="ChEBI" id="CHEBI:57705"/>
        <dbReference type="ChEBI" id="CHEBI:58702"/>
        <dbReference type="ChEBI" id="CHEBI:68483"/>
        <dbReference type="EC" id="2.5.1.7"/>
    </reaction>
</comment>
<comment type="pathway">
    <text evidence="1">Cell wall biogenesis; peptidoglycan biosynthesis.</text>
</comment>
<comment type="subcellular location">
    <subcellularLocation>
        <location evidence="1">Cytoplasm</location>
    </subcellularLocation>
</comment>
<comment type="similarity">
    <text evidence="1">Belongs to the EPSP synthase family. MurA subfamily.</text>
</comment>
<name>MURA2_CLOAB</name>
<proteinExistence type="inferred from homology"/>
<evidence type="ECO:0000255" key="1">
    <source>
        <dbReference type="HAMAP-Rule" id="MF_00111"/>
    </source>
</evidence>
<sequence length="418" mass="44327">MDKLVVNGGNPLFGSVEIGGAKNAAVAILPAAIMASEGISVIDNIPDIQDIQRLERIITSLGCKVKRVQNTVEIDSTNLTSVNADTEDGSKMRASYYLIGALLGRFGKAKVELPGGCPIGVRPIDQHIKGFEALGATVKISHGTVEAQADKLIGTNIYFDVVSVGATINLMLASVFAEGTTVLENAAKEPHIVDVANFLNSMGANIKGAGTDVIRIAGVEKLKGCNYSVIPDQIEAATYMIATAACGGCVTIKNVIPKHLESISAKLIEMGADIKEGDDYVTIESHKNLKGVNIKTLPYPGFPTDAQQPMSTLLSISQGRSIVNESIWESRLKHVDELKKMGANIKVEGTVAIIDGVEKLTGANVKATDLRAGAAMVIAALAAEGVSEISCIEHIDRGYPHIEDKFKELGANIRREKI</sequence>
<accession>Q97DD9</accession>
<reference key="1">
    <citation type="journal article" date="2001" name="J. Bacteriol.">
        <title>Genome sequence and comparative analysis of the solvent-producing bacterium Clostridium acetobutylicum.</title>
        <authorList>
            <person name="Noelling J."/>
            <person name="Breton G."/>
            <person name="Omelchenko M.V."/>
            <person name="Makarova K.S."/>
            <person name="Zeng Q."/>
            <person name="Gibson R."/>
            <person name="Lee H.M."/>
            <person name="Dubois J."/>
            <person name="Qiu D."/>
            <person name="Hitti J."/>
            <person name="Wolf Y.I."/>
            <person name="Tatusov R.L."/>
            <person name="Sabathe F."/>
            <person name="Doucette-Stamm L.A."/>
            <person name="Soucaille P."/>
            <person name="Daly M.J."/>
            <person name="Bennett G.N."/>
            <person name="Koonin E.V."/>
            <person name="Smith D.R."/>
        </authorList>
    </citation>
    <scope>NUCLEOTIDE SEQUENCE [LARGE SCALE GENOMIC DNA]</scope>
    <source>
        <strain>ATCC 824 / DSM 792 / JCM 1419 / IAM 19013 / LMG 5710 / NBRC 13948 / NRRL B-527 / VKM B-1787 / 2291 / W</strain>
    </source>
</reference>
<keyword id="KW-0131">Cell cycle</keyword>
<keyword id="KW-0132">Cell division</keyword>
<keyword id="KW-0133">Cell shape</keyword>
<keyword id="KW-0961">Cell wall biogenesis/degradation</keyword>
<keyword id="KW-0963">Cytoplasm</keyword>
<keyword id="KW-0573">Peptidoglycan synthesis</keyword>
<keyword id="KW-0670">Pyruvate</keyword>
<keyword id="KW-1185">Reference proteome</keyword>
<keyword id="KW-0808">Transferase</keyword>
<organism>
    <name type="scientific">Clostridium acetobutylicum (strain ATCC 824 / DSM 792 / JCM 1419 / IAM 19013 / LMG 5710 / NBRC 13948 / NRRL B-527 / VKM B-1787 / 2291 / W)</name>
    <dbReference type="NCBI Taxonomy" id="272562"/>
    <lineage>
        <taxon>Bacteria</taxon>
        <taxon>Bacillati</taxon>
        <taxon>Bacillota</taxon>
        <taxon>Clostridia</taxon>
        <taxon>Eubacteriales</taxon>
        <taxon>Clostridiaceae</taxon>
        <taxon>Clostridium</taxon>
    </lineage>
</organism>
<protein>
    <recommendedName>
        <fullName evidence="1">UDP-N-acetylglucosamine 1-carboxyvinyltransferase 2</fullName>
        <ecNumber evidence="1">2.5.1.7</ecNumber>
    </recommendedName>
    <alternativeName>
        <fullName evidence="1">Enoylpyruvate transferase 2</fullName>
    </alternativeName>
    <alternativeName>
        <fullName evidence="1">UDP-N-acetylglucosamine enolpyruvyl transferase 2</fullName>
        <shortName evidence="1">EPT 2</shortName>
    </alternativeName>
</protein>